<organismHost>
    <name type="scientific">Glycine max</name>
    <name type="common">Soybean</name>
    <name type="synonym">Glycine hispida</name>
    <dbReference type="NCBI Taxonomy" id="3847"/>
</organismHost>
<organismHost>
    <name type="scientific">Vigna mungo</name>
    <name type="common">Black gram</name>
    <name type="synonym">Phaseolus mungo</name>
    <dbReference type="NCBI Taxonomy" id="3915"/>
</organismHost>
<organismHost>
    <name type="scientific">Vigna radiata</name>
    <name type="common">Mung bean</name>
    <dbReference type="NCBI Taxonomy" id="157791"/>
</organismHost>
<organismHost>
    <name type="scientific">Vigna radiata var. radiata</name>
    <name type="common">Mung bean</name>
    <name type="synonym">Phaseolus aureus</name>
    <dbReference type="NCBI Taxonomy" id="3916"/>
</organismHost>
<organismHost>
    <name type="scientific">Vigna unguiculata</name>
    <name type="common">Cowpea</name>
    <dbReference type="NCBI Taxonomy" id="3917"/>
</organismHost>
<sequence>MKMENLISMFCFSSKGSSKRRTKGSSTWFPQPDQHITIRTFRRLKAHQMLSHTWTKTETSLTMEVSKSMADQLEEVNSLPTTLMPRHSIVDPSYRPSIY</sequence>
<proteinExistence type="inferred from homology"/>
<name>AC4_MYMVV</name>
<organism>
    <name type="scientific">Mungbean yellow mosaic virus (strain Vigna)</name>
    <name type="common">MYMV</name>
    <dbReference type="NCBI Taxonomy" id="223295"/>
    <lineage>
        <taxon>Viruses</taxon>
        <taxon>Monodnaviria</taxon>
        <taxon>Shotokuvirae</taxon>
        <taxon>Cressdnaviricota</taxon>
        <taxon>Repensiviricetes</taxon>
        <taxon>Geplafuvirales</taxon>
        <taxon>Geminiviridae</taxon>
        <taxon>Begomovirus</taxon>
        <taxon>Mungbean yellow mosaic virus</taxon>
    </lineage>
</organism>
<protein>
    <recommendedName>
        <fullName>Protein AC4</fullName>
    </recommendedName>
    <alternativeName>
        <fullName>Protein AL4</fullName>
    </alternativeName>
</protein>
<dbReference type="EMBL" id="AJ132575">
    <property type="protein sequence ID" value="CAA10708.1"/>
    <property type="molecule type" value="Genomic_DNA"/>
</dbReference>
<dbReference type="SwissPalm" id="Q9YPS1"/>
<dbReference type="Proteomes" id="UP000007784">
    <property type="component" value="Genome"/>
</dbReference>
<dbReference type="GO" id="GO:0052170">
    <property type="term" value="P:symbiont-mediated suppression of host innate immune response"/>
    <property type="evidence" value="ECO:0007669"/>
    <property type="project" value="UniProtKB-KW"/>
</dbReference>
<dbReference type="InterPro" id="IPR002488">
    <property type="entry name" value="Gemini_C4"/>
</dbReference>
<dbReference type="Pfam" id="PF01492">
    <property type="entry name" value="Gemini_C4"/>
    <property type="match status" value="1"/>
</dbReference>
<reference key="1">
    <citation type="journal article" date="2004" name="Arch. Virol.">
        <title>Analysis of an isolate of Mungbean yellow mosaic virus (MYMV) with a highly variable DNA B component.</title>
        <authorList>
            <person name="Karthikeyan A.S."/>
            <person name="Vanitharani R."/>
            <person name="Balaji V."/>
            <person name="Anuradha S."/>
            <person name="Thillaichidambaram P."/>
            <person name="Shivaprasad P.V."/>
            <person name="Parameswari C."/>
            <person name="Balamani V."/>
            <person name="Saminathan M."/>
            <person name="Veluthambi K."/>
        </authorList>
    </citation>
    <scope>NUCLEOTIDE SEQUENCE [GENOMIC DNA]</scope>
</reference>
<accession>Q9YPS1</accession>
<gene>
    <name type="ORF">AC4</name>
    <name type="ORF">AL4</name>
</gene>
<comment type="function">
    <text evidence="1">Pathogenicity determinant (By similarity). May act as a suppressor of RNA-mediated gene silencing, also known as post-transcriptional gene silencing (PTGS), a mechanism of plant viral defense that limits the accumulation of viral RNAs.</text>
</comment>
<comment type="similarity">
    <text evidence="2">Belongs to the geminiviridae protein AC4/C4 family.</text>
</comment>
<feature type="chain" id="PRO_0000323691" description="Protein AC4">
    <location>
        <begin position="1"/>
        <end position="99"/>
    </location>
</feature>
<evidence type="ECO:0000250" key="1"/>
<evidence type="ECO:0000305" key="2"/>
<keyword id="KW-0945">Host-virus interaction</keyword>
<keyword id="KW-1090">Inhibition of host innate immune response by virus</keyword>
<keyword id="KW-1185">Reference proteome</keyword>
<keyword id="KW-0941">Suppressor of RNA silencing</keyword>
<keyword id="KW-0899">Viral immunoevasion</keyword>